<feature type="chain" id="PRO_0000109922" description="Oxygen-dependent coproporphyrinogen-III oxidase">
    <location>
        <begin position="1"/>
        <end position="338"/>
    </location>
</feature>
<feature type="region of interest" description="Important for dimerization" evidence="1">
    <location>
        <begin position="274"/>
        <end position="309"/>
    </location>
</feature>
<feature type="active site" description="Proton donor" evidence="1">
    <location>
        <position position="118"/>
    </location>
</feature>
<feature type="binding site" evidence="1">
    <location>
        <position position="104"/>
    </location>
    <ligand>
        <name>substrate</name>
    </ligand>
</feature>
<feature type="binding site" evidence="1">
    <location>
        <position position="108"/>
    </location>
    <ligand>
        <name>a divalent metal cation</name>
        <dbReference type="ChEBI" id="CHEBI:60240"/>
    </ligand>
</feature>
<feature type="binding site" evidence="1">
    <location>
        <position position="118"/>
    </location>
    <ligand>
        <name>a divalent metal cation</name>
        <dbReference type="ChEBI" id="CHEBI:60240"/>
    </ligand>
</feature>
<feature type="binding site" evidence="1">
    <location>
        <begin position="120"/>
        <end position="122"/>
    </location>
    <ligand>
        <name>substrate</name>
    </ligand>
</feature>
<feature type="binding site" evidence="1">
    <location>
        <position position="152"/>
    </location>
    <ligand>
        <name>a divalent metal cation</name>
        <dbReference type="ChEBI" id="CHEBI:60240"/>
    </ligand>
</feature>
<feature type="binding site" evidence="1">
    <location>
        <position position="182"/>
    </location>
    <ligand>
        <name>a divalent metal cation</name>
        <dbReference type="ChEBI" id="CHEBI:60240"/>
    </ligand>
</feature>
<feature type="site" description="Important for dimerization" evidence="1">
    <location>
        <position position="182"/>
    </location>
</feature>
<comment type="function">
    <text evidence="1">Involved in the heme and chlorophyll biosynthesis. Catalyzes the aerobic oxidative decarboxylation of propionate groups of rings A and B of coproporphyrinogen-III to yield the vinyl groups in protoporphyrinogen-IX.</text>
</comment>
<comment type="catalytic activity">
    <reaction evidence="1">
        <text>coproporphyrinogen III + O2 + 2 H(+) = protoporphyrinogen IX + 2 CO2 + 2 H2O</text>
        <dbReference type="Rhea" id="RHEA:18257"/>
        <dbReference type="ChEBI" id="CHEBI:15377"/>
        <dbReference type="ChEBI" id="CHEBI:15378"/>
        <dbReference type="ChEBI" id="CHEBI:15379"/>
        <dbReference type="ChEBI" id="CHEBI:16526"/>
        <dbReference type="ChEBI" id="CHEBI:57307"/>
        <dbReference type="ChEBI" id="CHEBI:57309"/>
        <dbReference type="EC" id="1.3.3.3"/>
    </reaction>
</comment>
<comment type="cofactor">
    <cofactor evidence="1">
        <name>a divalent metal cation</name>
        <dbReference type="ChEBI" id="CHEBI:60240"/>
    </cofactor>
</comment>
<comment type="pathway">
    <text evidence="1">Porphyrin-containing compound metabolism; protoporphyrin-IX biosynthesis; protoporphyrinogen-IX from coproporphyrinogen-III (O2 route): step 1/1.</text>
</comment>
<comment type="subunit">
    <text evidence="1">Homodimer.</text>
</comment>
<comment type="subcellular location">
    <subcellularLocation>
        <location evidence="1">Cytoplasm</location>
    </subcellularLocation>
</comment>
<comment type="similarity">
    <text evidence="1">Belongs to the aerobic coproporphyrinogen-III oxidase family.</text>
</comment>
<comment type="sequence caution" evidence="2">
    <conflict type="erroneous initiation">
        <sequence resource="EMBL-CDS" id="BAC08235"/>
    </conflict>
    <text>Extended N-terminus.</text>
</comment>
<gene>
    <name evidence="1" type="primary">hemF</name>
    <name type="ordered locus">tll0684</name>
</gene>
<name>HEM6_THEVB</name>
<evidence type="ECO:0000255" key="1">
    <source>
        <dbReference type="HAMAP-Rule" id="MF_00333"/>
    </source>
</evidence>
<evidence type="ECO:0000305" key="2"/>
<dbReference type="EC" id="1.3.3.3" evidence="1"/>
<dbReference type="EMBL" id="BA000039">
    <property type="protein sequence ID" value="BAC08235.1"/>
    <property type="status" value="ALT_INIT"/>
    <property type="molecule type" value="Genomic_DNA"/>
</dbReference>
<dbReference type="RefSeq" id="NP_681473.1">
    <property type="nucleotide sequence ID" value="NC_004113.1"/>
</dbReference>
<dbReference type="RefSeq" id="WP_164920736.1">
    <property type="nucleotide sequence ID" value="NC_004113.1"/>
</dbReference>
<dbReference type="SMR" id="Q8DL15"/>
<dbReference type="STRING" id="197221.gene:10747274"/>
<dbReference type="EnsemblBacteria" id="BAC08235">
    <property type="protein sequence ID" value="BAC08235"/>
    <property type="gene ID" value="BAC08235"/>
</dbReference>
<dbReference type="KEGG" id="tel:tll0684"/>
<dbReference type="PATRIC" id="fig|197221.4.peg.723"/>
<dbReference type="eggNOG" id="COG0408">
    <property type="taxonomic scope" value="Bacteria"/>
</dbReference>
<dbReference type="UniPathway" id="UPA00251">
    <property type="reaction ID" value="UER00322"/>
</dbReference>
<dbReference type="Proteomes" id="UP000000440">
    <property type="component" value="Chromosome"/>
</dbReference>
<dbReference type="GO" id="GO:0005737">
    <property type="term" value="C:cytoplasm"/>
    <property type="evidence" value="ECO:0007669"/>
    <property type="project" value="UniProtKB-SubCell"/>
</dbReference>
<dbReference type="GO" id="GO:0004109">
    <property type="term" value="F:coproporphyrinogen oxidase activity"/>
    <property type="evidence" value="ECO:0007669"/>
    <property type="project" value="UniProtKB-UniRule"/>
</dbReference>
<dbReference type="GO" id="GO:0046872">
    <property type="term" value="F:metal ion binding"/>
    <property type="evidence" value="ECO:0007669"/>
    <property type="project" value="UniProtKB-KW"/>
</dbReference>
<dbReference type="GO" id="GO:0042803">
    <property type="term" value="F:protein homodimerization activity"/>
    <property type="evidence" value="ECO:0000250"/>
    <property type="project" value="UniProtKB"/>
</dbReference>
<dbReference type="GO" id="GO:0015995">
    <property type="term" value="P:chlorophyll biosynthetic process"/>
    <property type="evidence" value="ECO:0007669"/>
    <property type="project" value="UniProtKB-UniRule"/>
</dbReference>
<dbReference type="GO" id="GO:0006782">
    <property type="term" value="P:protoporphyrinogen IX biosynthetic process"/>
    <property type="evidence" value="ECO:0007669"/>
    <property type="project" value="UniProtKB-UniRule"/>
</dbReference>
<dbReference type="FunFam" id="3.40.1500.10:FF:000007">
    <property type="entry name" value="Oxygen-dependent coproporphyrinogen-III oxidase"/>
    <property type="match status" value="1"/>
</dbReference>
<dbReference type="Gene3D" id="3.40.1500.10">
    <property type="entry name" value="Coproporphyrinogen III oxidase, aerobic"/>
    <property type="match status" value="1"/>
</dbReference>
<dbReference type="HAMAP" id="MF_00333">
    <property type="entry name" value="Coprogen_oxidas"/>
    <property type="match status" value="1"/>
</dbReference>
<dbReference type="InterPro" id="IPR001260">
    <property type="entry name" value="Coprogen_oxidase_aer"/>
</dbReference>
<dbReference type="InterPro" id="IPR036406">
    <property type="entry name" value="Coprogen_oxidase_aer_sf"/>
</dbReference>
<dbReference type="InterPro" id="IPR018375">
    <property type="entry name" value="Coprogen_oxidase_CS"/>
</dbReference>
<dbReference type="NCBIfam" id="NF003727">
    <property type="entry name" value="PRK05330.1"/>
    <property type="match status" value="1"/>
</dbReference>
<dbReference type="PANTHER" id="PTHR10755">
    <property type="entry name" value="COPROPORPHYRINOGEN III OXIDASE, MITOCHONDRIAL"/>
    <property type="match status" value="1"/>
</dbReference>
<dbReference type="PANTHER" id="PTHR10755:SF0">
    <property type="entry name" value="OXYGEN-DEPENDENT COPROPORPHYRINOGEN-III OXIDASE, MITOCHONDRIAL"/>
    <property type="match status" value="1"/>
</dbReference>
<dbReference type="Pfam" id="PF01218">
    <property type="entry name" value="Coprogen_oxidas"/>
    <property type="match status" value="1"/>
</dbReference>
<dbReference type="PIRSF" id="PIRSF000166">
    <property type="entry name" value="Coproporphyri_ox"/>
    <property type="match status" value="1"/>
</dbReference>
<dbReference type="PRINTS" id="PR00073">
    <property type="entry name" value="COPRGNOXDASE"/>
</dbReference>
<dbReference type="SUPFAM" id="SSF102886">
    <property type="entry name" value="Coproporphyrinogen III oxidase"/>
    <property type="match status" value="1"/>
</dbReference>
<dbReference type="PROSITE" id="PS01021">
    <property type="entry name" value="COPROGEN_OXIDASE"/>
    <property type="match status" value="1"/>
</dbReference>
<protein>
    <recommendedName>
        <fullName evidence="1">Oxygen-dependent coproporphyrinogen-III oxidase</fullName>
        <shortName evidence="1">CPO</shortName>
        <shortName evidence="1">Coprogen oxidase</shortName>
        <shortName evidence="1">Coproporphyrinogenase</shortName>
        <ecNumber evidence="1">1.3.3.3</ecNumber>
    </recommendedName>
</protein>
<sequence>MTVATSASTAVPSDSRQRVATFLKDLQDQICQGLEAADGGAQFQEDTWQRPEGGGGRSRVMKNGQLLEQGGVNFSEVWGEQLPPSILAQRPEAAGYGFYATGTSMVLHPRNPYVPTVHLNYRYFEAGPVWWFGGGADLTPYYPFAEDAKHFHQVHQAACDRHHREYYPVFKRWCDEYFYLKHRGETRGVGGIFFDYQDGSDRELYRGPNPDGEAARYSQRVGSIGSRSWEDLFAFIQSCGQAFLEAYLPIVERRRHLTYGDRERQFQLYRRGRYVEFNLVYDRGTIFGLQTNGRTESILMSLPPLVRWEYGYTPEPNSREAELYSTFLKPQDWVNWPV</sequence>
<reference key="1">
    <citation type="journal article" date="2002" name="DNA Res.">
        <title>Complete genome structure of the thermophilic cyanobacterium Thermosynechococcus elongatus BP-1.</title>
        <authorList>
            <person name="Nakamura Y."/>
            <person name="Kaneko T."/>
            <person name="Sato S."/>
            <person name="Ikeuchi M."/>
            <person name="Katoh H."/>
            <person name="Sasamoto S."/>
            <person name="Watanabe A."/>
            <person name="Iriguchi M."/>
            <person name="Kawashima K."/>
            <person name="Kimura T."/>
            <person name="Kishida Y."/>
            <person name="Kiyokawa C."/>
            <person name="Kohara M."/>
            <person name="Matsumoto M."/>
            <person name="Matsuno A."/>
            <person name="Nakazaki N."/>
            <person name="Shimpo S."/>
            <person name="Sugimoto M."/>
            <person name="Takeuchi C."/>
            <person name="Yamada M."/>
            <person name="Tabata S."/>
        </authorList>
    </citation>
    <scope>NUCLEOTIDE SEQUENCE [LARGE SCALE GENOMIC DNA]</scope>
    <source>
        <strain>NIES-2133 / IAM M-273 / BP-1</strain>
    </source>
</reference>
<keyword id="KW-0149">Chlorophyll biosynthesis</keyword>
<keyword id="KW-0963">Cytoplasm</keyword>
<keyword id="KW-0350">Heme biosynthesis</keyword>
<keyword id="KW-0479">Metal-binding</keyword>
<keyword id="KW-0560">Oxidoreductase</keyword>
<keyword id="KW-0627">Porphyrin biosynthesis</keyword>
<keyword id="KW-1185">Reference proteome</keyword>
<accession>Q8DL15</accession>
<organism>
    <name type="scientific">Thermosynechococcus vestitus (strain NIES-2133 / IAM M-273 / BP-1)</name>
    <dbReference type="NCBI Taxonomy" id="197221"/>
    <lineage>
        <taxon>Bacteria</taxon>
        <taxon>Bacillati</taxon>
        <taxon>Cyanobacteriota</taxon>
        <taxon>Cyanophyceae</taxon>
        <taxon>Acaryochloridales</taxon>
        <taxon>Thermosynechococcaceae</taxon>
        <taxon>Thermosynechococcus</taxon>
    </lineage>
</organism>
<proteinExistence type="inferred from homology"/>